<comment type="function">
    <text evidence="1">Catalyzes the irreversible transfer of a propylamine group from the amino donor S-adenosylmethioninamine (decarboxy-AdoMet) to putrescine (1,4-diaminobutane) to yield spermidine.</text>
</comment>
<comment type="catalytic activity">
    <reaction evidence="1">
        <text>S-adenosyl 3-(methylsulfanyl)propylamine + putrescine = S-methyl-5'-thioadenosine + spermidine + H(+)</text>
        <dbReference type="Rhea" id="RHEA:12721"/>
        <dbReference type="ChEBI" id="CHEBI:15378"/>
        <dbReference type="ChEBI" id="CHEBI:17509"/>
        <dbReference type="ChEBI" id="CHEBI:57443"/>
        <dbReference type="ChEBI" id="CHEBI:57834"/>
        <dbReference type="ChEBI" id="CHEBI:326268"/>
        <dbReference type="EC" id="2.5.1.16"/>
    </reaction>
</comment>
<comment type="pathway">
    <text evidence="1">Amine and polyamine biosynthesis; spermidine biosynthesis; spermidine from putrescine: step 1/1.</text>
</comment>
<comment type="subunit">
    <text evidence="1">Homodimer or homotetramer.</text>
</comment>
<comment type="subcellular location">
    <subcellularLocation>
        <location evidence="1">Cytoplasm</location>
    </subcellularLocation>
</comment>
<comment type="similarity">
    <text evidence="1">Belongs to the spermidine/spermine synthase family.</text>
</comment>
<name>SPEE_CLOD6</name>
<gene>
    <name evidence="1" type="primary">speE</name>
    <name type="ordered locus">CD630_08900</name>
</gene>
<feature type="chain" id="PRO_1000011994" description="Polyamine aminopropyltransferase">
    <location>
        <begin position="1"/>
        <end position="283"/>
    </location>
</feature>
<feature type="domain" description="PABS" evidence="1">
    <location>
        <begin position="2"/>
        <end position="238"/>
    </location>
</feature>
<feature type="active site" description="Proton acceptor" evidence="1">
    <location>
        <position position="156"/>
    </location>
</feature>
<feature type="binding site" evidence="1">
    <location>
        <position position="31"/>
    </location>
    <ligand>
        <name>S-methyl-5'-thioadenosine</name>
        <dbReference type="ChEBI" id="CHEBI:17509"/>
    </ligand>
</feature>
<feature type="binding site" evidence="1">
    <location>
        <position position="62"/>
    </location>
    <ligand>
        <name>spermidine</name>
        <dbReference type="ChEBI" id="CHEBI:57834"/>
    </ligand>
</feature>
<feature type="binding site" evidence="1">
    <location>
        <position position="86"/>
    </location>
    <ligand>
        <name>spermidine</name>
        <dbReference type="ChEBI" id="CHEBI:57834"/>
    </ligand>
</feature>
<feature type="binding site" evidence="1">
    <location>
        <position position="106"/>
    </location>
    <ligand>
        <name>S-methyl-5'-thioadenosine</name>
        <dbReference type="ChEBI" id="CHEBI:17509"/>
    </ligand>
</feature>
<feature type="binding site" evidence="1">
    <location>
        <begin position="137"/>
        <end position="138"/>
    </location>
    <ligand>
        <name>S-methyl-5'-thioadenosine</name>
        <dbReference type="ChEBI" id="CHEBI:17509"/>
    </ligand>
</feature>
<feature type="binding site" evidence="1">
    <location>
        <begin position="156"/>
        <end position="159"/>
    </location>
    <ligand>
        <name>spermidine</name>
        <dbReference type="ChEBI" id="CHEBI:57834"/>
    </ligand>
</feature>
<feature type="binding site" evidence="1">
    <location>
        <position position="163"/>
    </location>
    <ligand>
        <name>S-methyl-5'-thioadenosine</name>
        <dbReference type="ChEBI" id="CHEBI:17509"/>
    </ligand>
</feature>
<evidence type="ECO:0000255" key="1">
    <source>
        <dbReference type="HAMAP-Rule" id="MF_00198"/>
    </source>
</evidence>
<dbReference type="EC" id="2.5.1.16" evidence="1"/>
<dbReference type="EMBL" id="AM180355">
    <property type="protein sequence ID" value="CAJ67723.1"/>
    <property type="molecule type" value="Genomic_DNA"/>
</dbReference>
<dbReference type="RefSeq" id="WP_009888722.1">
    <property type="nucleotide sequence ID" value="NZ_JAUPES010000038.1"/>
</dbReference>
<dbReference type="RefSeq" id="YP_001087364.1">
    <property type="nucleotide sequence ID" value="NC_009089.1"/>
</dbReference>
<dbReference type="SMR" id="Q18A85"/>
<dbReference type="STRING" id="272563.CD630_08900"/>
<dbReference type="EnsemblBacteria" id="CAJ67723">
    <property type="protein sequence ID" value="CAJ67723"/>
    <property type="gene ID" value="CD630_08900"/>
</dbReference>
<dbReference type="GeneID" id="66353394"/>
<dbReference type="KEGG" id="cdf:CD630_08900"/>
<dbReference type="KEGG" id="pdc:CDIF630_01010"/>
<dbReference type="PATRIC" id="fig|272563.120.peg.914"/>
<dbReference type="eggNOG" id="COG0421">
    <property type="taxonomic scope" value="Bacteria"/>
</dbReference>
<dbReference type="OrthoDB" id="9793120at2"/>
<dbReference type="PhylomeDB" id="Q18A85"/>
<dbReference type="BioCyc" id="PDIF272563:G12WB-998-MONOMER"/>
<dbReference type="UniPathway" id="UPA00248">
    <property type="reaction ID" value="UER00314"/>
</dbReference>
<dbReference type="Proteomes" id="UP000001978">
    <property type="component" value="Chromosome"/>
</dbReference>
<dbReference type="GO" id="GO:0005829">
    <property type="term" value="C:cytosol"/>
    <property type="evidence" value="ECO:0007669"/>
    <property type="project" value="TreeGrafter"/>
</dbReference>
<dbReference type="GO" id="GO:0004766">
    <property type="term" value="F:spermidine synthase activity"/>
    <property type="evidence" value="ECO:0007669"/>
    <property type="project" value="UniProtKB-UniRule"/>
</dbReference>
<dbReference type="GO" id="GO:0008295">
    <property type="term" value="P:spermidine biosynthetic process"/>
    <property type="evidence" value="ECO:0007669"/>
    <property type="project" value="UniProtKB-UniRule"/>
</dbReference>
<dbReference type="CDD" id="cd02440">
    <property type="entry name" value="AdoMet_MTases"/>
    <property type="match status" value="1"/>
</dbReference>
<dbReference type="Gene3D" id="2.30.140.10">
    <property type="entry name" value="Spermidine synthase, tetramerisation domain"/>
    <property type="match status" value="1"/>
</dbReference>
<dbReference type="Gene3D" id="3.40.50.150">
    <property type="entry name" value="Vaccinia Virus protein VP39"/>
    <property type="match status" value="1"/>
</dbReference>
<dbReference type="HAMAP" id="MF_00198">
    <property type="entry name" value="Spermidine_synth"/>
    <property type="match status" value="1"/>
</dbReference>
<dbReference type="InterPro" id="IPR030374">
    <property type="entry name" value="PABS"/>
</dbReference>
<dbReference type="InterPro" id="IPR030373">
    <property type="entry name" value="PABS_CS"/>
</dbReference>
<dbReference type="InterPro" id="IPR029063">
    <property type="entry name" value="SAM-dependent_MTases_sf"/>
</dbReference>
<dbReference type="InterPro" id="IPR001045">
    <property type="entry name" value="Spermi_synthase"/>
</dbReference>
<dbReference type="InterPro" id="IPR035246">
    <property type="entry name" value="Spermidine_synt_N"/>
</dbReference>
<dbReference type="InterPro" id="IPR037163">
    <property type="entry name" value="Spermidine_synt_N_sf"/>
</dbReference>
<dbReference type="NCBIfam" id="NF002010">
    <property type="entry name" value="PRK00811.1"/>
    <property type="match status" value="1"/>
</dbReference>
<dbReference type="NCBIfam" id="TIGR00417">
    <property type="entry name" value="speE"/>
    <property type="match status" value="1"/>
</dbReference>
<dbReference type="PANTHER" id="PTHR11558:SF11">
    <property type="entry name" value="SPERMIDINE SYNTHASE"/>
    <property type="match status" value="1"/>
</dbReference>
<dbReference type="PANTHER" id="PTHR11558">
    <property type="entry name" value="SPERMIDINE/SPERMINE SYNTHASE"/>
    <property type="match status" value="1"/>
</dbReference>
<dbReference type="Pfam" id="PF17284">
    <property type="entry name" value="Spermine_synt_N"/>
    <property type="match status" value="1"/>
</dbReference>
<dbReference type="Pfam" id="PF01564">
    <property type="entry name" value="Spermine_synth"/>
    <property type="match status" value="1"/>
</dbReference>
<dbReference type="SUPFAM" id="SSF53335">
    <property type="entry name" value="S-adenosyl-L-methionine-dependent methyltransferases"/>
    <property type="match status" value="1"/>
</dbReference>
<dbReference type="PROSITE" id="PS01330">
    <property type="entry name" value="PABS_1"/>
    <property type="match status" value="1"/>
</dbReference>
<dbReference type="PROSITE" id="PS51006">
    <property type="entry name" value="PABS_2"/>
    <property type="match status" value="1"/>
</dbReference>
<accession>Q18A85</accession>
<reference key="1">
    <citation type="journal article" date="2006" name="Nat. Genet.">
        <title>The multidrug-resistant human pathogen Clostridium difficile has a highly mobile, mosaic genome.</title>
        <authorList>
            <person name="Sebaihia M."/>
            <person name="Wren B.W."/>
            <person name="Mullany P."/>
            <person name="Fairweather N.F."/>
            <person name="Minton N."/>
            <person name="Stabler R."/>
            <person name="Thomson N.R."/>
            <person name="Roberts A.P."/>
            <person name="Cerdeno-Tarraga A.M."/>
            <person name="Wang H."/>
            <person name="Holden M.T.G."/>
            <person name="Wright A."/>
            <person name="Churcher C."/>
            <person name="Quail M.A."/>
            <person name="Baker S."/>
            <person name="Bason N."/>
            <person name="Brooks K."/>
            <person name="Chillingworth T."/>
            <person name="Cronin A."/>
            <person name="Davis P."/>
            <person name="Dowd L."/>
            <person name="Fraser A."/>
            <person name="Feltwell T."/>
            <person name="Hance Z."/>
            <person name="Holroyd S."/>
            <person name="Jagels K."/>
            <person name="Moule S."/>
            <person name="Mungall K."/>
            <person name="Price C."/>
            <person name="Rabbinowitsch E."/>
            <person name="Sharp S."/>
            <person name="Simmonds M."/>
            <person name="Stevens K."/>
            <person name="Unwin L."/>
            <person name="Whithead S."/>
            <person name="Dupuy B."/>
            <person name="Dougan G."/>
            <person name="Barrell B."/>
            <person name="Parkhill J."/>
        </authorList>
    </citation>
    <scope>NUCLEOTIDE SEQUENCE [LARGE SCALE GENOMIC DNA]</scope>
    <source>
        <strain>630</strain>
    </source>
</reference>
<organism>
    <name type="scientific">Clostridioides difficile (strain 630)</name>
    <name type="common">Peptoclostridium difficile</name>
    <dbReference type="NCBI Taxonomy" id="272563"/>
    <lineage>
        <taxon>Bacteria</taxon>
        <taxon>Bacillati</taxon>
        <taxon>Bacillota</taxon>
        <taxon>Clostridia</taxon>
        <taxon>Peptostreptococcales</taxon>
        <taxon>Peptostreptococcaceae</taxon>
        <taxon>Clostridioides</taxon>
    </lineage>
</organism>
<protein>
    <recommendedName>
        <fullName evidence="1">Polyamine aminopropyltransferase</fullName>
    </recommendedName>
    <alternativeName>
        <fullName evidence="1">Putrescine aminopropyltransferase</fullName>
        <shortName evidence="1">PAPT</shortName>
    </alternativeName>
    <alternativeName>
        <fullName evidence="1">Spermidine synthase</fullName>
        <shortName evidence="1">SPDS</shortName>
        <shortName evidence="1">SPDSY</shortName>
        <ecNumber evidence="1">2.5.1.16</ecNumber>
    </alternativeName>
</protein>
<sequence length="283" mass="32992">MELWYTEEWTENVRFSIKVNKHLFEGKSQFQRIDVFDSDEFGKFLTIDGLMMVTYKDEFIYHEMITHVPMATNLNIKKVLVIGGGDGGTVRELSRYPQIEKIDMVEIDKMVVDVSKEYMDICSCKLDDKRVSLYFEDGVNFVKCAHDKSYDLIIVDSTDPIGPGEGLFSTDFYKDCYRILTDDGILVNQSESPYFDFNAKEMKRANKKLKQIFPISEVYQAHIPTYPSGHWLFGFASKKLNPVKNQDRNGWEKLSLKTKYYNSDIHLGSFMLPQYVKEMLDEE</sequence>
<keyword id="KW-0963">Cytoplasm</keyword>
<keyword id="KW-0620">Polyamine biosynthesis</keyword>
<keyword id="KW-1185">Reference proteome</keyword>
<keyword id="KW-0745">Spermidine biosynthesis</keyword>
<keyword id="KW-0808">Transferase</keyword>
<proteinExistence type="inferred from homology"/>